<dbReference type="EC" id="3.2.1.-" evidence="7"/>
<dbReference type="EMBL" id="JX421684">
    <property type="protein sequence ID" value="AFT91388.1"/>
    <property type="molecule type" value="Genomic_DNA"/>
</dbReference>
<dbReference type="SMR" id="K0E4E1"/>
<dbReference type="GlyCosmos" id="K0E4E1">
    <property type="glycosylation" value="6 sites, No reported glycans"/>
</dbReference>
<dbReference type="GO" id="GO:0005737">
    <property type="term" value="C:cytoplasm"/>
    <property type="evidence" value="ECO:0007669"/>
    <property type="project" value="TreeGrafter"/>
</dbReference>
<dbReference type="GO" id="GO:0004575">
    <property type="term" value="F:sucrose alpha-glucosidase activity"/>
    <property type="evidence" value="ECO:0007669"/>
    <property type="project" value="TreeGrafter"/>
</dbReference>
<dbReference type="GO" id="GO:0005987">
    <property type="term" value="P:sucrose catabolic process"/>
    <property type="evidence" value="ECO:0007669"/>
    <property type="project" value="TreeGrafter"/>
</dbReference>
<dbReference type="CDD" id="cd18622">
    <property type="entry name" value="GH32_Inu-like"/>
    <property type="match status" value="1"/>
</dbReference>
<dbReference type="FunFam" id="2.60.120.560:FF:000003">
    <property type="entry name" value="Extracellular exo-inulinase inuE"/>
    <property type="match status" value="1"/>
</dbReference>
<dbReference type="Gene3D" id="2.60.120.560">
    <property type="entry name" value="Exo-inulinase, domain 1"/>
    <property type="match status" value="1"/>
</dbReference>
<dbReference type="Gene3D" id="2.115.10.20">
    <property type="entry name" value="Glycosyl hydrolase domain, family 43"/>
    <property type="match status" value="2"/>
</dbReference>
<dbReference type="InterPro" id="IPR013320">
    <property type="entry name" value="ConA-like_dom_sf"/>
</dbReference>
<dbReference type="InterPro" id="IPR001362">
    <property type="entry name" value="Glyco_hydro_32"/>
</dbReference>
<dbReference type="InterPro" id="IPR018053">
    <property type="entry name" value="Glyco_hydro_32_AS"/>
</dbReference>
<dbReference type="InterPro" id="IPR013189">
    <property type="entry name" value="Glyco_hydro_32_C"/>
</dbReference>
<dbReference type="InterPro" id="IPR013148">
    <property type="entry name" value="Glyco_hydro_32_N"/>
</dbReference>
<dbReference type="InterPro" id="IPR023296">
    <property type="entry name" value="Glyco_hydro_beta-prop_sf"/>
</dbReference>
<dbReference type="PANTHER" id="PTHR42800">
    <property type="entry name" value="EXOINULINASE INUD (AFU_ORTHOLOGUE AFUA_5G00480)"/>
    <property type="match status" value="1"/>
</dbReference>
<dbReference type="PANTHER" id="PTHR42800:SF1">
    <property type="entry name" value="EXOINULINASE INUD (AFU_ORTHOLOGUE AFUA_5G00480)"/>
    <property type="match status" value="1"/>
</dbReference>
<dbReference type="Pfam" id="PF08244">
    <property type="entry name" value="Glyco_hydro_32C"/>
    <property type="match status" value="1"/>
</dbReference>
<dbReference type="Pfam" id="PF00251">
    <property type="entry name" value="Glyco_hydro_32N"/>
    <property type="match status" value="2"/>
</dbReference>
<dbReference type="SMART" id="SM00640">
    <property type="entry name" value="Glyco_32"/>
    <property type="match status" value="1"/>
</dbReference>
<dbReference type="SUPFAM" id="SSF75005">
    <property type="entry name" value="Arabinanase/levansucrase/invertase"/>
    <property type="match status" value="1"/>
</dbReference>
<dbReference type="SUPFAM" id="SSF49899">
    <property type="entry name" value="Concanavalin A-like lectins/glucanases"/>
    <property type="match status" value="1"/>
</dbReference>
<dbReference type="PROSITE" id="PS00609">
    <property type="entry name" value="GLYCOSYL_HYDROL_F32"/>
    <property type="match status" value="1"/>
</dbReference>
<feature type="signal peptide" evidence="1">
    <location>
        <begin position="1"/>
        <end position="21"/>
    </location>
</feature>
<feature type="chain" id="PRO_5003830476" description="Putative glycosyl hydrolase ecdE" evidence="1">
    <location>
        <begin position="22"/>
        <end position="703"/>
    </location>
</feature>
<feature type="active site" evidence="3">
    <location>
        <position position="47"/>
    </location>
</feature>
<feature type="glycosylation site" description="N-linked (GlcNAc...) asparagine" evidence="2">
    <location>
        <position position="104"/>
    </location>
</feature>
<feature type="glycosylation site" description="N-linked (GlcNAc...) asparagine" evidence="2">
    <location>
        <position position="120"/>
    </location>
</feature>
<feature type="glycosylation site" description="N-linked (GlcNAc...) asparagine" evidence="2">
    <location>
        <position position="293"/>
    </location>
</feature>
<feature type="glycosylation site" description="N-linked (GlcNAc...) asparagine" evidence="2">
    <location>
        <position position="397"/>
    </location>
</feature>
<feature type="glycosylation site" description="N-linked (GlcNAc...) asparagine" evidence="2">
    <location>
        <position position="443"/>
    </location>
</feature>
<feature type="glycosylation site" description="N-linked (GlcNAc...) asparagine" evidence="2">
    <location>
        <position position="641"/>
    </location>
</feature>
<reference key="1">
    <citation type="journal article" date="2012" name="J. Am. Chem. Soc.">
        <title>Identification and characterization of the echinocandin B biosynthetic gene cluster from Emericella rugulosa NRRL 11440.</title>
        <authorList>
            <person name="Cacho R.A."/>
            <person name="Jiang W."/>
            <person name="Chooi Y.H."/>
            <person name="Walsh C.T."/>
            <person name="Tang Y."/>
        </authorList>
    </citation>
    <scope>NUCLEOTIDE SEQUENCE [GENOMIC DNA]</scope>
    <source>
        <strain>ATCC 58397 / NRRL 11440</strain>
    </source>
</reference>
<reference key="2">
    <citation type="journal article" date="2016" name="BMC Genomics">
        <title>Echinocandin B biosynthesis: a biosynthetic cluster from Aspergillus nidulans NRRL 8112 and reassembly of the subclusters Ecd and Hty from Aspergillus pachycristatus NRRL 11440 reveals a single coherent gene cluster.</title>
        <authorList>
            <person name="Huettel W."/>
            <person name="Youssar L."/>
            <person name="Gruening B.A."/>
            <person name="Guenther S."/>
            <person name="Hugentobler K.G."/>
        </authorList>
    </citation>
    <scope>CLUSTER REVISION</scope>
</reference>
<gene>
    <name evidence="5" type="primary">ecdE</name>
</gene>
<comment type="similarity">
    <text evidence="6">Belongs to the glycosyl hydrolase 32 family.</text>
</comment>
<comment type="caution">
    <text evidence="4">EcdB, ecdC, ecdD, ecdE and ecdF have previously been identified as being part of the echinocandin B biosynthetic cluster, but it was later realized that this was due to a genome misassembly and these 5 proteins are now considered as artifacts and not part of the cluster.</text>
</comment>
<accession>K0E4E1</accession>
<name>ECDE_ASPRU</name>
<keyword id="KW-0325">Glycoprotein</keyword>
<keyword id="KW-0326">Glycosidase</keyword>
<keyword id="KW-0378">Hydrolase</keyword>
<keyword id="KW-0732">Signal</keyword>
<organism>
    <name type="scientific">Aspergillus rugulosus</name>
    <name type="common">Emericella rugulosa</name>
    <dbReference type="NCBI Taxonomy" id="41736"/>
    <lineage>
        <taxon>Eukaryota</taxon>
        <taxon>Fungi</taxon>
        <taxon>Dikarya</taxon>
        <taxon>Ascomycota</taxon>
        <taxon>Pezizomycotina</taxon>
        <taxon>Eurotiomycetes</taxon>
        <taxon>Eurotiomycetidae</taxon>
        <taxon>Eurotiales</taxon>
        <taxon>Aspergillaceae</taxon>
        <taxon>Aspergillus</taxon>
        <taxon>Aspergillus subgen. Nidulantes</taxon>
    </lineage>
</organism>
<proteinExistence type="inferred from homology"/>
<evidence type="ECO:0000255" key="1"/>
<evidence type="ECO:0000255" key="2">
    <source>
        <dbReference type="PROSITE-ProRule" id="PRU00498"/>
    </source>
</evidence>
<evidence type="ECO:0000255" key="3">
    <source>
        <dbReference type="PROSITE-ProRule" id="PRU10067"/>
    </source>
</evidence>
<evidence type="ECO:0000269" key="4">
    <source>
    </source>
</evidence>
<evidence type="ECO:0000303" key="5">
    <source>
    </source>
</evidence>
<evidence type="ECO:0000305" key="6"/>
<evidence type="ECO:0000305" key="7">
    <source>
    </source>
</evidence>
<sequence length="703" mass="77435">MKLNIFASAILLCTSAFPVAASRLDKPYTEVYRPQYHFSPKENWMNDPNGLVYDTDEGIYHIYFQYNPGGTTWGAMSWGHATSRDLMHWTEHPVALRARGFPDNITEMFFSGTVVVDESNTSGFGRKGKVPWVAIYTSYYPMEQVLPSGKRVRKDQQAQSIAYSLDKGMTWTTYDAANPVIAEPPAPYHDQHLEFRDPSVFWHVETSRWVAVVSLAKLHKILIYTSQDLKQWDWVSEFGPANAVGGVWECPSIFPLTLDGSQQDKWVLMLGLNPGGPPGTIGSGTQYIVGDFNGTTFTADADSIYDGSGPNDGMIFEDFEGDESLAARGWATTGDFINASPVRGTLSGQNAVTGFQGQQLFNTFLNGDATTGAITSAPFDITYKYINFLVGGGNDINETAIRLNVNGKTVHASTGSNDEHLTWQSWDVSSLKGQRAVIEIIDNASDGWGHINVDQICFSNTRATNQIANWLDWGPDFYAALSFNGLDRDQRTILAWMNNWQYGAAIPTDPWRSAMTVPRRLALKTIDGKPSLVQQPAGRWRTSGNHGREFSFRAVDGVRPLGRLGKALDIELTFSSNMSPSNGLGEFGVSIAATKGYQYGTRVGYDFATQQVFVDRSRSGDVSFDATFPGVYHAPLSNSANGTISLRILLDWSSVEVFGAHGEATITSQIFPGPDAVYGQLFSSGGQTRDVSLQVREIQSTWH</sequence>
<protein>
    <recommendedName>
        <fullName evidence="5">Putative glycosyl hydrolase ecdE</fullName>
        <ecNumber evidence="7">3.2.1.-</ecNumber>
    </recommendedName>
</protein>